<feature type="chain" id="PRO_0000164560" description="D-aminoacyl-tRNA deacylase">
    <location>
        <begin position="1"/>
        <end position="143"/>
    </location>
</feature>
<feature type="short sequence motif" description="Gly-cisPro motif, important for rejection of L-amino acids" evidence="1">
    <location>
        <begin position="135"/>
        <end position="136"/>
    </location>
</feature>
<reference key="1">
    <citation type="journal article" date="2003" name="Proc. Natl. Acad. Sci. U.S.A.">
        <title>The complete genome sequence of Mycobacterium bovis.</title>
        <authorList>
            <person name="Garnier T."/>
            <person name="Eiglmeier K."/>
            <person name="Camus J.-C."/>
            <person name="Medina N."/>
            <person name="Mansoor H."/>
            <person name="Pryor M."/>
            <person name="Duthoy S."/>
            <person name="Grondin S."/>
            <person name="Lacroix C."/>
            <person name="Monsempe C."/>
            <person name="Simon S."/>
            <person name="Harris B."/>
            <person name="Atkin R."/>
            <person name="Doggett J."/>
            <person name="Mayes R."/>
            <person name="Keating L."/>
            <person name="Wheeler P.R."/>
            <person name="Parkhill J."/>
            <person name="Barrell B.G."/>
            <person name="Cole S.T."/>
            <person name="Gordon S.V."/>
            <person name="Hewinson R.G."/>
        </authorList>
    </citation>
    <scope>NUCLEOTIDE SEQUENCE [LARGE SCALE GENOMIC DNA]</scope>
    <source>
        <strain>ATCC BAA-935 / AF2122/97</strain>
    </source>
</reference>
<reference key="2">
    <citation type="journal article" date="2017" name="Genome Announc.">
        <title>Updated reference genome sequence and annotation of Mycobacterium bovis AF2122/97.</title>
        <authorList>
            <person name="Malone K.M."/>
            <person name="Farrell D."/>
            <person name="Stuber T.P."/>
            <person name="Schubert O.T."/>
            <person name="Aebersold R."/>
            <person name="Robbe-Austerman S."/>
            <person name="Gordon S.V."/>
        </authorList>
    </citation>
    <scope>NUCLEOTIDE SEQUENCE [LARGE SCALE GENOMIC DNA]</scope>
    <scope>GENOME REANNOTATION</scope>
    <source>
        <strain>ATCC BAA-935 / AF2122/97</strain>
    </source>
</reference>
<name>DTD_MYCBO</name>
<proteinExistence type="inferred from homology"/>
<dbReference type="EC" id="3.1.1.96" evidence="1"/>
<dbReference type="EMBL" id="LT708304">
    <property type="protein sequence ID" value="SIU00535.1"/>
    <property type="molecule type" value="Genomic_DNA"/>
</dbReference>
<dbReference type="RefSeq" id="NP_855583.1">
    <property type="nucleotide sequence ID" value="NC_002945.3"/>
</dbReference>
<dbReference type="RefSeq" id="WP_003409533.1">
    <property type="nucleotide sequence ID" value="NC_002945.4"/>
</dbReference>
<dbReference type="SMR" id="P63996"/>
<dbReference type="KEGG" id="mbo:BQ2027_MB1932C"/>
<dbReference type="PATRIC" id="fig|233413.5.peg.2119"/>
<dbReference type="Proteomes" id="UP000001419">
    <property type="component" value="Chromosome"/>
</dbReference>
<dbReference type="GO" id="GO:0005737">
    <property type="term" value="C:cytoplasm"/>
    <property type="evidence" value="ECO:0007669"/>
    <property type="project" value="UniProtKB-SubCell"/>
</dbReference>
<dbReference type="GO" id="GO:0051500">
    <property type="term" value="F:D-tyrosyl-tRNA(Tyr) deacylase activity"/>
    <property type="evidence" value="ECO:0007669"/>
    <property type="project" value="TreeGrafter"/>
</dbReference>
<dbReference type="GO" id="GO:0106026">
    <property type="term" value="F:Gly-tRNA(Ala) deacylase activity"/>
    <property type="evidence" value="ECO:0007669"/>
    <property type="project" value="UniProtKB-UniRule"/>
</dbReference>
<dbReference type="GO" id="GO:0043908">
    <property type="term" value="F:Ser(Gly)-tRNA(Ala) hydrolase activity"/>
    <property type="evidence" value="ECO:0007669"/>
    <property type="project" value="UniProtKB-UniRule"/>
</dbReference>
<dbReference type="GO" id="GO:0000049">
    <property type="term" value="F:tRNA binding"/>
    <property type="evidence" value="ECO:0007669"/>
    <property type="project" value="UniProtKB-UniRule"/>
</dbReference>
<dbReference type="GO" id="GO:0019478">
    <property type="term" value="P:D-amino acid catabolic process"/>
    <property type="evidence" value="ECO:0007669"/>
    <property type="project" value="UniProtKB-UniRule"/>
</dbReference>
<dbReference type="CDD" id="cd00563">
    <property type="entry name" value="Dtyr_deacylase"/>
    <property type="match status" value="1"/>
</dbReference>
<dbReference type="FunFam" id="3.50.80.10:FF:000002">
    <property type="entry name" value="D-aminoacyl-tRNA deacylase"/>
    <property type="match status" value="1"/>
</dbReference>
<dbReference type="Gene3D" id="3.50.80.10">
    <property type="entry name" value="D-tyrosyl-tRNA(Tyr) deacylase"/>
    <property type="match status" value="1"/>
</dbReference>
<dbReference type="HAMAP" id="MF_00518">
    <property type="entry name" value="Deacylase_Dtd"/>
    <property type="match status" value="1"/>
</dbReference>
<dbReference type="InterPro" id="IPR003732">
    <property type="entry name" value="Daa-tRNA_deacyls_DTD"/>
</dbReference>
<dbReference type="InterPro" id="IPR023509">
    <property type="entry name" value="DTD-like_sf"/>
</dbReference>
<dbReference type="NCBIfam" id="TIGR00256">
    <property type="entry name" value="D-aminoacyl-tRNA deacylase"/>
    <property type="match status" value="1"/>
</dbReference>
<dbReference type="PANTHER" id="PTHR10472:SF5">
    <property type="entry name" value="D-AMINOACYL-TRNA DEACYLASE 1"/>
    <property type="match status" value="1"/>
</dbReference>
<dbReference type="PANTHER" id="PTHR10472">
    <property type="entry name" value="D-TYROSYL-TRNA TYR DEACYLASE"/>
    <property type="match status" value="1"/>
</dbReference>
<dbReference type="Pfam" id="PF02580">
    <property type="entry name" value="Tyr_Deacylase"/>
    <property type="match status" value="1"/>
</dbReference>
<dbReference type="SUPFAM" id="SSF69500">
    <property type="entry name" value="DTD-like"/>
    <property type="match status" value="1"/>
</dbReference>
<keyword id="KW-0963">Cytoplasm</keyword>
<keyword id="KW-0378">Hydrolase</keyword>
<keyword id="KW-1185">Reference proteome</keyword>
<keyword id="KW-0694">RNA-binding</keyword>
<keyword id="KW-0820">tRNA-binding</keyword>
<organism>
    <name type="scientific">Mycobacterium bovis (strain ATCC BAA-935 / AF2122/97)</name>
    <dbReference type="NCBI Taxonomy" id="233413"/>
    <lineage>
        <taxon>Bacteria</taxon>
        <taxon>Bacillati</taxon>
        <taxon>Actinomycetota</taxon>
        <taxon>Actinomycetes</taxon>
        <taxon>Mycobacteriales</taxon>
        <taxon>Mycobacteriaceae</taxon>
        <taxon>Mycobacterium</taxon>
        <taxon>Mycobacterium tuberculosis complex</taxon>
    </lineage>
</organism>
<evidence type="ECO:0000255" key="1">
    <source>
        <dbReference type="HAMAP-Rule" id="MF_00518"/>
    </source>
</evidence>
<sequence>MRVLVQRVSSAAVRVDGRVVGAIRPDGQGLVAFVGVTHGDDLDKARRLAEKLWNLRVLADEKSASDMHAPILVISQFTLYADTAKGRRPSWNAAAPGAVAQPLIAAFAAALRQLGAHVEAGVFGAHMQVELVNDGPVTVMLEG</sequence>
<protein>
    <recommendedName>
        <fullName evidence="1">D-aminoacyl-tRNA deacylase</fullName>
        <shortName evidence="1">DTD</shortName>
        <ecNumber evidence="1">3.1.1.96</ecNumber>
    </recommendedName>
    <alternativeName>
        <fullName evidence="1">Gly-tRNA(Ala) deacylase</fullName>
    </alternativeName>
</protein>
<comment type="function">
    <text evidence="1">An aminoacyl-tRNA editing enzyme that deacylates mischarged D-aminoacyl-tRNAs. Also deacylates mischarged glycyl-tRNA(Ala), protecting cells against glycine mischarging by AlaRS. Acts via tRNA-based rather than protein-based catalysis; rejects L-amino acids rather than detecting D-amino acids in the active site. By recycling D-aminoacyl-tRNA to D-amino acids and free tRNA molecules, this enzyme counteracts the toxicity associated with the formation of D-aminoacyl-tRNA entities in vivo and helps enforce protein L-homochirality.</text>
</comment>
<comment type="catalytic activity">
    <reaction evidence="1">
        <text>glycyl-tRNA(Ala) + H2O = tRNA(Ala) + glycine + H(+)</text>
        <dbReference type="Rhea" id="RHEA:53744"/>
        <dbReference type="Rhea" id="RHEA-COMP:9657"/>
        <dbReference type="Rhea" id="RHEA-COMP:13640"/>
        <dbReference type="ChEBI" id="CHEBI:15377"/>
        <dbReference type="ChEBI" id="CHEBI:15378"/>
        <dbReference type="ChEBI" id="CHEBI:57305"/>
        <dbReference type="ChEBI" id="CHEBI:78442"/>
        <dbReference type="ChEBI" id="CHEBI:78522"/>
        <dbReference type="EC" id="3.1.1.96"/>
    </reaction>
</comment>
<comment type="catalytic activity">
    <reaction evidence="1">
        <text>a D-aminoacyl-tRNA + H2O = a tRNA + a D-alpha-amino acid + H(+)</text>
        <dbReference type="Rhea" id="RHEA:13953"/>
        <dbReference type="Rhea" id="RHEA-COMP:10123"/>
        <dbReference type="Rhea" id="RHEA-COMP:10124"/>
        <dbReference type="ChEBI" id="CHEBI:15377"/>
        <dbReference type="ChEBI" id="CHEBI:15378"/>
        <dbReference type="ChEBI" id="CHEBI:59871"/>
        <dbReference type="ChEBI" id="CHEBI:78442"/>
        <dbReference type="ChEBI" id="CHEBI:79333"/>
        <dbReference type="EC" id="3.1.1.96"/>
    </reaction>
</comment>
<comment type="subunit">
    <text evidence="1">Homodimer.</text>
</comment>
<comment type="subcellular location">
    <subcellularLocation>
        <location evidence="1">Cytoplasm</location>
    </subcellularLocation>
</comment>
<comment type="domain">
    <text evidence="1">A Gly-cisPro motif from one monomer fits into the active site of the other monomer to allow specific chiral rejection of L-amino acids.</text>
</comment>
<comment type="similarity">
    <text evidence="1">Belongs to the DTD family.</text>
</comment>
<accession>P63996</accession>
<accession>A0A1R3Y0G6</accession>
<accession>O07735</accession>
<accession>X2BJL1</accession>
<gene>
    <name evidence="1" type="primary">dtd</name>
    <name type="ordered locus">BQ2027_MB1932C</name>
</gene>